<reference key="1">
    <citation type="journal article" date="2001" name="Biochem. Biophys. Res. Commun.">
        <title>Differential expression of three sialidase genes in rat development.</title>
        <authorList>
            <person name="Hasegawa T."/>
            <person name="Feijoo Carnero C."/>
            <person name="Wada T."/>
            <person name="Itoyama Y."/>
            <person name="Miyagi T."/>
        </authorList>
    </citation>
    <scope>NUCLEOTIDE SEQUENCE [MRNA]</scope>
    <scope>TISSUE SPECIFICITY</scope>
    <source>
        <strain>Sprague-Dawley</strain>
        <tissue>Brain</tissue>
    </source>
</reference>
<reference key="2">
    <citation type="journal article" date="2004" name="Genome Res.">
        <title>The status, quality, and expansion of the NIH full-length cDNA project: the Mammalian Gene Collection (MGC).</title>
        <authorList>
            <consortium name="The MGC Project Team"/>
        </authorList>
    </citation>
    <scope>NUCLEOTIDE SEQUENCE [LARGE SCALE MRNA]</scope>
    <source>
        <tissue>Prostate</tissue>
    </source>
</reference>
<comment type="function">
    <text evidence="4">Exo-alpha-sialidase that catalyzes the hydrolytic cleavage of the terminal sialic acid (N-acetylneuraminic acid, Neu5Ac) of a glycan moiety in the catabolism of glycolipids, glycoproteins and oligosacharides. Displays high catalytic efficiency for gangliosides including alpha-(2-&gt;3)-sialylated GD1a and GM3 and alpha-(2-&gt;8)-sialylated GD3. Plays a role in the regulation of transmembrane signaling through the modulation of ganglioside content of the lipid bilayer and by direct interaction with signaling receptors, such as EGFR. Desialylates EGFR and activates downstream signaling in proliferating cells. Contributes to clathrin-mediated endocytosis by regulating sorting of endocytosed receptors to early and recycling endosomes.</text>
</comment>
<comment type="catalytic activity">
    <reaction evidence="4">
        <text>Hydrolysis of alpha-(2-&gt;3)-, alpha-(2-&gt;6)-, alpha-(2-&gt;8)- glycosidic linkages of terminal sialic acid residues in oligosaccharides, glycoproteins, glycolipids, colominic acid and synthetic substrates.</text>
        <dbReference type="EC" id="3.2.1.18"/>
    </reaction>
</comment>
<comment type="catalytic activity">
    <reaction evidence="4">
        <text>a ganglioside GD1a + H2O = a ganglioside GM1 + N-acetylneuraminate</text>
        <dbReference type="Rhea" id="RHEA:47832"/>
        <dbReference type="ChEBI" id="CHEBI:15377"/>
        <dbReference type="ChEBI" id="CHEBI:35418"/>
        <dbReference type="ChEBI" id="CHEBI:82637"/>
        <dbReference type="ChEBI" id="CHEBI:82639"/>
    </reaction>
    <physiologicalReaction direction="left-to-right" evidence="4">
        <dbReference type="Rhea" id="RHEA:47833"/>
    </physiologicalReaction>
</comment>
<comment type="catalytic activity">
    <reaction evidence="4">
        <text>a ganglioside GD1a (d18:1(4E)) + H2O = a ganglioside GM1 (d18:1(4E)) + N-acetylneuraminate</text>
        <dbReference type="Rhea" id="RHEA:47856"/>
        <dbReference type="ChEBI" id="CHEBI:15377"/>
        <dbReference type="ChEBI" id="CHEBI:35418"/>
        <dbReference type="ChEBI" id="CHEBI:77709"/>
        <dbReference type="ChEBI" id="CHEBI:78445"/>
    </reaction>
    <physiologicalReaction direction="left-to-right" evidence="4">
        <dbReference type="Rhea" id="RHEA:47857"/>
    </physiologicalReaction>
</comment>
<comment type="catalytic activity">
    <reaction evidence="4">
        <text>a ganglioside GD1b + H2O = a ganglioside GM1 + N-acetylneuraminate</text>
        <dbReference type="Rhea" id="RHEA:47876"/>
        <dbReference type="ChEBI" id="CHEBI:15377"/>
        <dbReference type="ChEBI" id="CHEBI:35418"/>
        <dbReference type="ChEBI" id="CHEBI:82639"/>
        <dbReference type="ChEBI" id="CHEBI:82939"/>
    </reaction>
    <physiologicalReaction direction="left-to-right" evidence="4">
        <dbReference type="Rhea" id="RHEA:47877"/>
    </physiologicalReaction>
</comment>
<comment type="catalytic activity">
    <reaction evidence="4">
        <text>a ganglioside GD1b (d18:1(4E)) + H2O = a ganglioside GM1 (d18:1(4E)) + N-acetylneuraminate</text>
        <dbReference type="Rhea" id="RHEA:48064"/>
        <dbReference type="ChEBI" id="CHEBI:15377"/>
        <dbReference type="ChEBI" id="CHEBI:35418"/>
        <dbReference type="ChEBI" id="CHEBI:77709"/>
        <dbReference type="ChEBI" id="CHEBI:87785"/>
    </reaction>
    <physiologicalReaction direction="left-to-right" evidence="4">
        <dbReference type="Rhea" id="RHEA:48065"/>
    </physiologicalReaction>
</comment>
<comment type="catalytic activity">
    <reaction evidence="4">
        <text>a ganglioside GD3 + H2O = a ganglioside GM3 + N-acetylneuraminate</text>
        <dbReference type="Rhea" id="RHEA:48120"/>
        <dbReference type="ChEBI" id="CHEBI:15377"/>
        <dbReference type="ChEBI" id="CHEBI:35418"/>
        <dbReference type="ChEBI" id="CHEBI:79210"/>
        <dbReference type="ChEBI" id="CHEBI:79214"/>
    </reaction>
    <physiologicalReaction direction="left-to-right" evidence="4">
        <dbReference type="Rhea" id="RHEA:48121"/>
    </physiologicalReaction>
</comment>
<comment type="catalytic activity">
    <reaction evidence="4">
        <text>a ganglioside GD3 (d18:1(4E)) + H2O = a ganglioside GM3 (d18:1(4E)) + N-acetylneuraminate</text>
        <dbReference type="Rhea" id="RHEA:48124"/>
        <dbReference type="ChEBI" id="CHEBI:15377"/>
        <dbReference type="ChEBI" id="CHEBI:35418"/>
        <dbReference type="ChEBI" id="CHEBI:60065"/>
        <dbReference type="ChEBI" id="CHEBI:78436"/>
    </reaction>
    <physiologicalReaction direction="left-to-right" evidence="4">
        <dbReference type="Rhea" id="RHEA:48125"/>
    </physiologicalReaction>
</comment>
<comment type="catalytic activity">
    <reaction evidence="4">
        <text>a ganglioside GM3 + H2O = a beta-D-galactosyl-(1-&gt;4)-beta-D-glucosyl-(1&lt;-&gt;1)-ceramide + N-acetylneuraminate</text>
        <dbReference type="Rhea" id="RHEA:48136"/>
        <dbReference type="ChEBI" id="CHEBI:15377"/>
        <dbReference type="ChEBI" id="CHEBI:35418"/>
        <dbReference type="ChEBI" id="CHEBI:79208"/>
        <dbReference type="ChEBI" id="CHEBI:79210"/>
    </reaction>
    <physiologicalReaction direction="left-to-right" evidence="4">
        <dbReference type="Rhea" id="RHEA:48137"/>
    </physiologicalReaction>
</comment>
<comment type="catalytic activity">
    <reaction evidence="3">
        <text>a ganglioside GM1 + H2O = a ganglioside GA1 + N-acetylneuraminate</text>
        <dbReference type="Rhea" id="RHEA:47872"/>
        <dbReference type="ChEBI" id="CHEBI:15377"/>
        <dbReference type="ChEBI" id="CHEBI:35418"/>
        <dbReference type="ChEBI" id="CHEBI:82639"/>
        <dbReference type="ChEBI" id="CHEBI:88069"/>
    </reaction>
    <physiologicalReaction direction="left-to-right" evidence="3">
        <dbReference type="Rhea" id="RHEA:47873"/>
    </physiologicalReaction>
</comment>
<comment type="catalytic activity">
    <reaction evidence="3">
        <text>a ganglioside GM1 (d18:1(4E)) + H2O = a ganglioside GA1 (d18:1(4E)) + N-acetylneuraminate</text>
        <dbReference type="Rhea" id="RHEA:48072"/>
        <dbReference type="ChEBI" id="CHEBI:15377"/>
        <dbReference type="ChEBI" id="CHEBI:27938"/>
        <dbReference type="ChEBI" id="CHEBI:35418"/>
        <dbReference type="ChEBI" id="CHEBI:77709"/>
    </reaction>
    <physiologicalReaction direction="left-to-right" evidence="3">
        <dbReference type="Rhea" id="RHEA:48073"/>
    </physiologicalReaction>
</comment>
<comment type="catalytic activity">
    <reaction evidence="3">
        <text>a ganglioside GM2 (d18:1(4E)) + H2O = a ganglioside GA2 (d18:1(4E)) + N-acetylneuraminate</text>
        <dbReference type="Rhea" id="RHEA:48068"/>
        <dbReference type="ChEBI" id="CHEBI:15377"/>
        <dbReference type="ChEBI" id="CHEBI:27731"/>
        <dbReference type="ChEBI" id="CHEBI:35418"/>
        <dbReference type="ChEBI" id="CHEBI:71502"/>
    </reaction>
    <physiologicalReaction direction="left-to-right" evidence="3">
        <dbReference type="Rhea" id="RHEA:48069"/>
    </physiologicalReaction>
</comment>
<comment type="catalytic activity">
    <reaction evidence="4">
        <text>a ganglioside GM3 (d18:1(4E)) + H2O = a beta-D-Gal-(1-&gt;4)-beta-D-Glc-(1&lt;-&gt;1)-Cer(d18:1(4E)) + N-acetylneuraminate</text>
        <dbReference type="Rhea" id="RHEA:47900"/>
        <dbReference type="ChEBI" id="CHEBI:15377"/>
        <dbReference type="ChEBI" id="CHEBI:17950"/>
        <dbReference type="ChEBI" id="CHEBI:35418"/>
        <dbReference type="ChEBI" id="CHEBI:60065"/>
    </reaction>
    <physiologicalReaction direction="left-to-right" evidence="4">
        <dbReference type="Rhea" id="RHEA:47901"/>
    </physiologicalReaction>
</comment>
<comment type="catalytic activity">
    <reaction evidence="2">
        <text>a ganglioside GT1b + H2O = a ganglioside GD1b + N-acetylneuraminate</text>
        <dbReference type="Rhea" id="RHEA:47828"/>
        <dbReference type="ChEBI" id="CHEBI:15377"/>
        <dbReference type="ChEBI" id="CHEBI:35418"/>
        <dbReference type="ChEBI" id="CHEBI:82939"/>
        <dbReference type="ChEBI" id="CHEBI:82940"/>
    </reaction>
    <physiologicalReaction direction="left-to-right" evidence="2">
        <dbReference type="Rhea" id="RHEA:47829"/>
    </physiologicalReaction>
</comment>
<comment type="subunit">
    <text evidence="4">Interacts with CAV1; this interaction enhances NEU3 sialidase activity within caveola. Interacts with EGFR; this interaction mediates desialylation of EGFR enhancing downstream signaling.</text>
</comment>
<comment type="subcellular location">
    <subcellularLocation>
        <location evidence="4">Cell membrane</location>
        <topology evidence="4">Peripheral membrane protein</topology>
    </subcellularLocation>
    <subcellularLocation>
        <location evidence="4">Membrane</location>
        <location evidence="4">Caveola</location>
    </subcellularLocation>
    <subcellularLocation>
        <location evidence="4">Early endosome membrane</location>
        <topology evidence="4">Peripheral membrane protein</topology>
    </subcellularLocation>
    <subcellularLocation>
        <location evidence="4">Recycling endosome membrane</location>
        <topology evidence="4">Peripheral membrane protein</topology>
    </subcellularLocation>
    <subcellularLocation>
        <location evidence="4">Lysosome membrane</location>
        <topology evidence="4">Peripheral membrane protein</topology>
    </subcellularLocation>
    <text evidence="3 4">Associates with the external leaflet of the plasma membrane (By similarity). S-acylated NEU3 likely spans the lipid bilayer with a portion of C-terminus exposed to cytosol and the catalytic region facing the extracellular space (By similarity).</text>
</comment>
<comment type="tissue specificity">
    <text evidence="6">Expressed in brain, cardiac muscle and weakly in liver.</text>
</comment>
<comment type="PTM">
    <text evidence="4">Palmitoylated; may regulate intracellular trafficking and anchorage to plasma membrane and endomembranes.</text>
</comment>
<comment type="similarity">
    <text evidence="7">Belongs to the glycosyl hydrolase 33 family.</text>
</comment>
<feature type="chain" id="PRO_0000208905" description="Sialidase-3">
    <location>
        <begin position="1"/>
        <end position="418"/>
    </location>
</feature>
<feature type="repeat" description="BNR 1">
    <location>
        <begin position="129"/>
        <end position="140"/>
    </location>
</feature>
<feature type="repeat" description="BNR 2">
    <location>
        <begin position="201"/>
        <end position="212"/>
    </location>
</feature>
<feature type="repeat" description="BNR 3">
    <location>
        <begin position="252"/>
        <end position="263"/>
    </location>
</feature>
<feature type="short sequence motif" description="FRIP motif">
    <location>
        <begin position="24"/>
        <end position="27"/>
    </location>
</feature>
<feature type="active site" description="Proton acceptor" evidence="1">
    <location>
        <position position="50"/>
    </location>
</feature>
<feature type="active site" description="Nucleophile" evidence="1">
    <location>
        <position position="369"/>
    </location>
</feature>
<feature type="active site" evidence="5">
    <location>
        <position position="386"/>
    </location>
</feature>
<feature type="binding site" evidence="1">
    <location>
        <position position="25"/>
    </location>
    <ligand>
        <name>substrate</name>
    </ligand>
</feature>
<feature type="binding site" evidence="1">
    <location>
        <position position="45"/>
    </location>
    <ligand>
        <name>substrate</name>
    </ligand>
</feature>
<feature type="binding site" evidence="1">
    <location>
        <position position="179"/>
    </location>
    <ligand>
        <name>substrate</name>
    </ligand>
</feature>
<feature type="binding site" evidence="1">
    <location>
        <position position="181"/>
    </location>
    <ligand>
        <name>substrate</name>
    </ligand>
</feature>
<feature type="binding site" evidence="1">
    <location>
        <position position="223"/>
    </location>
    <ligand>
        <name>substrate</name>
    </ligand>
</feature>
<feature type="binding site" evidence="5">
    <location>
        <position position="243"/>
    </location>
    <ligand>
        <name>substrate</name>
    </ligand>
</feature>
<feature type="binding site" evidence="1">
    <location>
        <position position="339"/>
    </location>
    <ligand>
        <name>substrate</name>
    </ligand>
</feature>
<accession>Q99PW5</accession>
<accession>Q497C0</accession>
<protein>
    <recommendedName>
        <fullName>Sialidase-3</fullName>
        <ecNumber evidence="4">3.2.1.18</ecNumber>
    </recommendedName>
    <alternativeName>
        <fullName>Ganglioside sialidase</fullName>
    </alternativeName>
    <alternativeName>
        <fullName>Membrane sialidase</fullName>
    </alternativeName>
    <alternativeName>
        <fullName>N-acetyl-alpha-neuraminidase 3</fullName>
    </alternativeName>
</protein>
<name>NEUR3_RAT</name>
<evidence type="ECO:0000250" key="1"/>
<evidence type="ECO:0000250" key="2">
    <source>
        <dbReference type="UniProtKB" id="O97859"/>
    </source>
</evidence>
<evidence type="ECO:0000250" key="3">
    <source>
        <dbReference type="UniProtKB" id="Q9JMH7"/>
    </source>
</evidence>
<evidence type="ECO:0000250" key="4">
    <source>
        <dbReference type="UniProtKB" id="Q9UQ49"/>
    </source>
</evidence>
<evidence type="ECO:0000255" key="5"/>
<evidence type="ECO:0000269" key="6">
    <source>
    </source>
</evidence>
<evidence type="ECO:0000305" key="7"/>
<keyword id="KW-0119">Carbohydrate metabolism</keyword>
<keyword id="KW-1003">Cell membrane</keyword>
<keyword id="KW-0967">Endosome</keyword>
<keyword id="KW-0326">Glycosidase</keyword>
<keyword id="KW-0378">Hydrolase</keyword>
<keyword id="KW-0442">Lipid degradation</keyword>
<keyword id="KW-0443">Lipid metabolism</keyword>
<keyword id="KW-0449">Lipoprotein</keyword>
<keyword id="KW-0458">Lysosome</keyword>
<keyword id="KW-0472">Membrane</keyword>
<keyword id="KW-1185">Reference proteome</keyword>
<keyword id="KW-0677">Repeat</keyword>
<dbReference type="EC" id="3.2.1.18" evidence="4"/>
<dbReference type="EMBL" id="AB026841">
    <property type="protein sequence ID" value="BAB32440.1"/>
    <property type="molecule type" value="mRNA"/>
</dbReference>
<dbReference type="EMBL" id="BC100625">
    <property type="protein sequence ID" value="AAI00626.1"/>
    <property type="molecule type" value="mRNA"/>
</dbReference>
<dbReference type="PIR" id="JC7588">
    <property type="entry name" value="JC7588"/>
</dbReference>
<dbReference type="RefSeq" id="NP_001380602.1">
    <property type="nucleotide sequence ID" value="NM_001393673.1"/>
</dbReference>
<dbReference type="RefSeq" id="NP_446462.1">
    <property type="nucleotide sequence ID" value="NM_054010.2"/>
</dbReference>
<dbReference type="RefSeq" id="XP_008757887.1">
    <property type="nucleotide sequence ID" value="XM_008759665.2"/>
</dbReference>
<dbReference type="SMR" id="Q99PW5"/>
<dbReference type="FunCoup" id="Q99PW5">
    <property type="interactions" value="620"/>
</dbReference>
<dbReference type="STRING" id="10116.ENSRNOP00000024420"/>
<dbReference type="CAZy" id="GH33">
    <property type="family name" value="Glycoside Hydrolase Family 33"/>
</dbReference>
<dbReference type="PhosphoSitePlus" id="Q99PW5"/>
<dbReference type="SwissPalm" id="Q99PW5"/>
<dbReference type="PaxDb" id="10116-ENSRNOP00000024420"/>
<dbReference type="Ensembl" id="ENSRNOT00000024420.6">
    <property type="protein sequence ID" value="ENSRNOP00000024420.2"/>
    <property type="gene ID" value="ENSRNOG00000018106.6"/>
</dbReference>
<dbReference type="GeneID" id="117185"/>
<dbReference type="KEGG" id="rno:117185"/>
<dbReference type="UCSC" id="RGD:619881">
    <property type="organism name" value="rat"/>
</dbReference>
<dbReference type="AGR" id="RGD:619881"/>
<dbReference type="CTD" id="10825"/>
<dbReference type="RGD" id="619881">
    <property type="gene designation" value="Neu3"/>
</dbReference>
<dbReference type="eggNOG" id="ENOG502QSFT">
    <property type="taxonomic scope" value="Eukaryota"/>
</dbReference>
<dbReference type="GeneTree" id="ENSGT00950000182944"/>
<dbReference type="HOGENOM" id="CLU_024620_2_1_1"/>
<dbReference type="InParanoid" id="Q99PW5"/>
<dbReference type="OMA" id="ECGIKRE"/>
<dbReference type="OrthoDB" id="2739686at2759"/>
<dbReference type="PhylomeDB" id="Q99PW5"/>
<dbReference type="TreeFam" id="TF331063"/>
<dbReference type="Reactome" id="R-RNO-4085001">
    <property type="pathway name" value="Sialic acid metabolism"/>
</dbReference>
<dbReference type="Reactome" id="R-RNO-9840310">
    <property type="pathway name" value="Glycosphingolipid catabolism"/>
</dbReference>
<dbReference type="PRO" id="PR:Q99PW5"/>
<dbReference type="Proteomes" id="UP000002494">
    <property type="component" value="Chromosome 1"/>
</dbReference>
<dbReference type="Bgee" id="ENSRNOG00000018106">
    <property type="expression patterns" value="Expressed in skeletal muscle tissue and 19 other cell types or tissues"/>
</dbReference>
<dbReference type="GO" id="GO:0005901">
    <property type="term" value="C:caveola"/>
    <property type="evidence" value="ECO:0007669"/>
    <property type="project" value="UniProtKB-SubCell"/>
</dbReference>
<dbReference type="GO" id="GO:0005737">
    <property type="term" value="C:cytoplasm"/>
    <property type="evidence" value="ECO:0000318"/>
    <property type="project" value="GO_Central"/>
</dbReference>
<dbReference type="GO" id="GO:0031901">
    <property type="term" value="C:early endosome membrane"/>
    <property type="evidence" value="ECO:0000266"/>
    <property type="project" value="RGD"/>
</dbReference>
<dbReference type="GO" id="GO:0009897">
    <property type="term" value="C:external side of plasma membrane"/>
    <property type="evidence" value="ECO:0000266"/>
    <property type="project" value="RGD"/>
</dbReference>
<dbReference type="GO" id="GO:0005765">
    <property type="term" value="C:lysosomal membrane"/>
    <property type="evidence" value="ECO:0000266"/>
    <property type="project" value="RGD"/>
</dbReference>
<dbReference type="GO" id="GO:0005764">
    <property type="term" value="C:lysosome"/>
    <property type="evidence" value="ECO:0000318"/>
    <property type="project" value="GO_Central"/>
</dbReference>
<dbReference type="GO" id="GO:0016020">
    <property type="term" value="C:membrane"/>
    <property type="evidence" value="ECO:0000318"/>
    <property type="project" value="GO_Central"/>
</dbReference>
<dbReference type="GO" id="GO:0005886">
    <property type="term" value="C:plasma membrane"/>
    <property type="evidence" value="ECO:0000250"/>
    <property type="project" value="UniProtKB"/>
</dbReference>
<dbReference type="GO" id="GO:0055038">
    <property type="term" value="C:recycling endosome membrane"/>
    <property type="evidence" value="ECO:0000266"/>
    <property type="project" value="RGD"/>
</dbReference>
<dbReference type="GO" id="GO:0016997">
    <property type="term" value="F:alpha-sialidase activity"/>
    <property type="evidence" value="ECO:0000266"/>
    <property type="project" value="RGD"/>
</dbReference>
<dbReference type="GO" id="GO:0004308">
    <property type="term" value="F:exo-alpha-sialidase activity"/>
    <property type="evidence" value="ECO:0000250"/>
    <property type="project" value="UniProtKB"/>
</dbReference>
<dbReference type="GO" id="GO:0005975">
    <property type="term" value="P:carbohydrate metabolic process"/>
    <property type="evidence" value="ECO:0000266"/>
    <property type="project" value="RGD"/>
</dbReference>
<dbReference type="GO" id="GO:0006689">
    <property type="term" value="P:ganglioside catabolic process"/>
    <property type="evidence" value="ECO:0000250"/>
    <property type="project" value="UniProtKB"/>
</dbReference>
<dbReference type="GO" id="GO:1900186">
    <property type="term" value="P:negative regulation of clathrin-dependent endocytosis"/>
    <property type="evidence" value="ECO:0000266"/>
    <property type="project" value="RGD"/>
</dbReference>
<dbReference type="GO" id="GO:0009313">
    <property type="term" value="P:oligosaccharide catabolic process"/>
    <property type="evidence" value="ECO:0000266"/>
    <property type="project" value="RGD"/>
</dbReference>
<dbReference type="GO" id="GO:0045742">
    <property type="term" value="P:positive regulation of epidermal growth factor receptor signaling pathway"/>
    <property type="evidence" value="ECO:0000266"/>
    <property type="project" value="RGD"/>
</dbReference>
<dbReference type="CDD" id="cd15482">
    <property type="entry name" value="Sialidase_non-viral"/>
    <property type="match status" value="1"/>
</dbReference>
<dbReference type="Gene3D" id="2.120.10.10">
    <property type="match status" value="1"/>
</dbReference>
<dbReference type="InterPro" id="IPR011040">
    <property type="entry name" value="Sialidase"/>
</dbReference>
<dbReference type="InterPro" id="IPR026856">
    <property type="entry name" value="Sialidase_fam"/>
</dbReference>
<dbReference type="InterPro" id="IPR036278">
    <property type="entry name" value="Sialidase_sf"/>
</dbReference>
<dbReference type="PANTHER" id="PTHR10628">
    <property type="entry name" value="SIALIDASE"/>
    <property type="match status" value="1"/>
</dbReference>
<dbReference type="PANTHER" id="PTHR10628:SF23">
    <property type="entry name" value="SIALIDASE-3"/>
    <property type="match status" value="1"/>
</dbReference>
<dbReference type="Pfam" id="PF13088">
    <property type="entry name" value="BNR_2"/>
    <property type="match status" value="1"/>
</dbReference>
<dbReference type="SUPFAM" id="SSF50939">
    <property type="entry name" value="Sialidases"/>
    <property type="match status" value="1"/>
</dbReference>
<sequence length="418" mass="46980">MEEVSSCSLRSTLFQQEEQNRITYRIPALLYIPPTHTFLAFAEMRTSSRDEDAVYLVFRRGVMKGCSVEWGPQQPLMEATLPGHRTMSPCPVWEKNTGRVYLFFICVQGHVSERWQLLWGRNAARLCFLYSEDSGCSWGEVKDLTEEVVGSEMKHWATFAVGPGHGIQLQSGRLLIPAYAYLISCWFLCFPCSVKPHSLMFYSDDLGVTWHCGKFIKPQVTGECQVAEVPGKAGNLVLYCSARTPNKFRAEAFSTDSGDCFQKPTLNQQLCEPRGGCQGSVVSTRPLKMPYTCQDSSGKDVPSTQKCPLMDRSLEVEEGAGAPSGTWLLYSHPTNKKKRMNLGIYYNQNPLEVNYWSRPWILNRGPSGYSDLAVVEGQGLFACLFECGERHEDEKIDFCLFSDQEVLSCDDCTSPSSN</sequence>
<gene>
    <name type="primary">Neu3</name>
</gene>
<organism>
    <name type="scientific">Rattus norvegicus</name>
    <name type="common">Rat</name>
    <dbReference type="NCBI Taxonomy" id="10116"/>
    <lineage>
        <taxon>Eukaryota</taxon>
        <taxon>Metazoa</taxon>
        <taxon>Chordata</taxon>
        <taxon>Craniata</taxon>
        <taxon>Vertebrata</taxon>
        <taxon>Euteleostomi</taxon>
        <taxon>Mammalia</taxon>
        <taxon>Eutheria</taxon>
        <taxon>Euarchontoglires</taxon>
        <taxon>Glires</taxon>
        <taxon>Rodentia</taxon>
        <taxon>Myomorpha</taxon>
        <taxon>Muroidea</taxon>
        <taxon>Muridae</taxon>
        <taxon>Murinae</taxon>
        <taxon>Rattus</taxon>
    </lineage>
</organism>
<proteinExistence type="evidence at transcript level"/>